<gene>
    <name evidence="1" type="primary">rpsL</name>
    <name type="ordered locus">ML1880</name>
</gene>
<proteinExistence type="inferred from homology"/>
<reference key="1">
    <citation type="journal article" date="1993" name="Mol. Microbiol.">
        <title>Nucleotide sequence of the first cosmid from the Mycobacterium leprae genome project: structure and function of the Rif-Str regions.</title>
        <authorList>
            <person name="Honore N.T."/>
            <person name="Bergh S."/>
            <person name="Chanteau S."/>
            <person name="Doucet-Populaire F."/>
            <person name="Eiglmeier K."/>
            <person name="Garnier T."/>
            <person name="Georges C."/>
            <person name="Launois P."/>
            <person name="Limpaiboon T."/>
            <person name="Newton S."/>
            <person name="Niang K."/>
            <person name="del Portillo P."/>
            <person name="Ramesh G.R."/>
            <person name="Reddi P."/>
            <person name="Ridel P.R."/>
            <person name="Sittisombut N."/>
            <person name="Wu-Hunter S."/>
            <person name="Cole S.T."/>
        </authorList>
    </citation>
    <scope>NUCLEOTIDE SEQUENCE [GENOMIC DNA]</scope>
</reference>
<reference key="2">
    <citation type="journal article" date="1994" name="Antimicrob. Agents Chemother.">
        <title>Streptomycin resistance in mycobacteria.</title>
        <authorList>
            <person name="Honore N."/>
            <person name="Cole S.T."/>
        </authorList>
    </citation>
    <scope>NUCLEOTIDE SEQUENCE [GENOMIC DNA]</scope>
</reference>
<reference key="3">
    <citation type="submission" date="1995-03" db="EMBL/GenBank/DDBJ databases">
        <authorList>
            <person name="Silbak F."/>
            <person name="Bercovier H."/>
        </authorList>
    </citation>
    <scope>NUCLEOTIDE SEQUENCE [GENOMIC DNA]</scope>
</reference>
<reference key="4">
    <citation type="journal article" date="2001" name="Nature">
        <title>Massive gene decay in the leprosy bacillus.</title>
        <authorList>
            <person name="Cole S.T."/>
            <person name="Eiglmeier K."/>
            <person name="Parkhill J."/>
            <person name="James K.D."/>
            <person name="Thomson N.R."/>
            <person name="Wheeler P.R."/>
            <person name="Honore N."/>
            <person name="Garnier T."/>
            <person name="Churcher C.M."/>
            <person name="Harris D.E."/>
            <person name="Mungall K.L."/>
            <person name="Basham D."/>
            <person name="Brown D."/>
            <person name="Chillingworth T."/>
            <person name="Connor R."/>
            <person name="Davies R.M."/>
            <person name="Devlin K."/>
            <person name="Duthoy S."/>
            <person name="Feltwell T."/>
            <person name="Fraser A."/>
            <person name="Hamlin N."/>
            <person name="Holroyd S."/>
            <person name="Hornsby T."/>
            <person name="Jagels K."/>
            <person name="Lacroix C."/>
            <person name="Maclean J."/>
            <person name="Moule S."/>
            <person name="Murphy L.D."/>
            <person name="Oliver K."/>
            <person name="Quail M.A."/>
            <person name="Rajandream M.A."/>
            <person name="Rutherford K.M."/>
            <person name="Rutter S."/>
            <person name="Seeger K."/>
            <person name="Simon S."/>
            <person name="Simmonds M."/>
            <person name="Skelton J."/>
            <person name="Squares R."/>
            <person name="Squares S."/>
            <person name="Stevens K."/>
            <person name="Taylor K."/>
            <person name="Whitehead S."/>
            <person name="Woodward J.R."/>
            <person name="Barrell B.G."/>
        </authorList>
    </citation>
    <scope>NUCLEOTIDE SEQUENCE [LARGE SCALE GENOMIC DNA]</scope>
    <source>
        <strain>TN</strain>
    </source>
</reference>
<protein>
    <recommendedName>
        <fullName evidence="1">Small ribosomal subunit protein uS12</fullName>
    </recommendedName>
    <alternativeName>
        <fullName evidence="3">30S ribosomal protein S12</fullName>
    </alternativeName>
</protein>
<keyword id="KW-1185">Reference proteome</keyword>
<keyword id="KW-0687">Ribonucleoprotein</keyword>
<keyword id="KW-0689">Ribosomal protein</keyword>
<keyword id="KW-0694">RNA-binding</keyword>
<keyword id="KW-0699">rRNA-binding</keyword>
<keyword id="KW-0820">tRNA-binding</keyword>
<feature type="chain" id="PRO_0000146263" description="Small ribosomal subunit protein uS12">
    <location>
        <begin position="1"/>
        <end position="124"/>
    </location>
</feature>
<feature type="region of interest" description="Disordered" evidence="2">
    <location>
        <begin position="105"/>
        <end position="124"/>
    </location>
</feature>
<feature type="compositionally biased region" description="Basic residues" evidence="2">
    <location>
        <begin position="108"/>
        <end position="118"/>
    </location>
</feature>
<feature type="sequence conflict" description="In Ref. 3; AAA63909." evidence="3" ref="3">
    <original>KPNSAL</original>
    <variation>NRTRR</variation>
    <location>
        <begin position="44"/>
        <end position="49"/>
    </location>
</feature>
<feature type="sequence conflict" description="In Ref. 1; CAA78671." evidence="3" ref="1">
    <original>A</original>
    <variation>R</variation>
    <location>
        <position position="48"/>
    </location>
</feature>
<accession>P30766</accession>
<name>RS12_MYCLE</name>
<organism>
    <name type="scientific">Mycobacterium leprae (strain TN)</name>
    <dbReference type="NCBI Taxonomy" id="272631"/>
    <lineage>
        <taxon>Bacteria</taxon>
        <taxon>Bacillati</taxon>
        <taxon>Actinomycetota</taxon>
        <taxon>Actinomycetes</taxon>
        <taxon>Mycobacteriales</taxon>
        <taxon>Mycobacteriaceae</taxon>
        <taxon>Mycobacterium</taxon>
    </lineage>
</organism>
<sequence>MPTIQQLVRKGRRDKIGKVKTAALKGNPQRRGVCTRVYTSTPKKPNSALRKVARVKLTSQVEVTAYIPGEGHNLQEHSMVLVRGGRVKDLPGVRYKIIRGSLDTQGVKNRKQARSRYGAKKEKS</sequence>
<evidence type="ECO:0000255" key="1">
    <source>
        <dbReference type="HAMAP-Rule" id="MF_00403"/>
    </source>
</evidence>
<evidence type="ECO:0000256" key="2">
    <source>
        <dbReference type="SAM" id="MobiDB-lite"/>
    </source>
</evidence>
<evidence type="ECO:0000305" key="3"/>
<dbReference type="EMBL" id="Z14314">
    <property type="protein sequence ID" value="CAA78671.1"/>
    <property type="status" value="ALT_INIT"/>
    <property type="molecule type" value="Genomic_DNA"/>
</dbReference>
<dbReference type="EMBL" id="X80119">
    <property type="protein sequence ID" value="CAA56423.1"/>
    <property type="molecule type" value="Genomic_DNA"/>
</dbReference>
<dbReference type="EMBL" id="X80124">
    <property type="protein sequence ID" value="CAA56425.1"/>
    <property type="molecule type" value="Genomic_DNA"/>
</dbReference>
<dbReference type="EMBL" id="L40409">
    <property type="protein sequence ID" value="AAA63909.1"/>
    <property type="status" value="ALT_INIT"/>
    <property type="molecule type" value="Genomic_DNA"/>
</dbReference>
<dbReference type="EMBL" id="AL583923">
    <property type="protein sequence ID" value="CAC30834.1"/>
    <property type="molecule type" value="Genomic_DNA"/>
</dbReference>
<dbReference type="PIR" id="B87144">
    <property type="entry name" value="B87144"/>
</dbReference>
<dbReference type="PIR" id="S31148">
    <property type="entry name" value="S31148"/>
</dbReference>
<dbReference type="RefSeq" id="NP_302270.1">
    <property type="nucleotide sequence ID" value="NC_002677.1"/>
</dbReference>
<dbReference type="RefSeq" id="WP_010908591.1">
    <property type="nucleotide sequence ID" value="NC_002677.1"/>
</dbReference>
<dbReference type="SMR" id="P30766"/>
<dbReference type="STRING" id="272631.gene:17575728"/>
<dbReference type="KEGG" id="mle:ML1880"/>
<dbReference type="PATRIC" id="fig|272631.5.peg.3554"/>
<dbReference type="Leproma" id="ML1880"/>
<dbReference type="eggNOG" id="COG0048">
    <property type="taxonomic scope" value="Bacteria"/>
</dbReference>
<dbReference type="HOGENOM" id="CLU_104295_1_2_11"/>
<dbReference type="OrthoDB" id="9802366at2"/>
<dbReference type="Proteomes" id="UP000000806">
    <property type="component" value="Chromosome"/>
</dbReference>
<dbReference type="GO" id="GO:0015935">
    <property type="term" value="C:small ribosomal subunit"/>
    <property type="evidence" value="ECO:0007669"/>
    <property type="project" value="InterPro"/>
</dbReference>
<dbReference type="GO" id="GO:0019843">
    <property type="term" value="F:rRNA binding"/>
    <property type="evidence" value="ECO:0007669"/>
    <property type="project" value="UniProtKB-UniRule"/>
</dbReference>
<dbReference type="GO" id="GO:0003735">
    <property type="term" value="F:structural constituent of ribosome"/>
    <property type="evidence" value="ECO:0007669"/>
    <property type="project" value="InterPro"/>
</dbReference>
<dbReference type="GO" id="GO:0000049">
    <property type="term" value="F:tRNA binding"/>
    <property type="evidence" value="ECO:0007669"/>
    <property type="project" value="UniProtKB-UniRule"/>
</dbReference>
<dbReference type="GO" id="GO:0006412">
    <property type="term" value="P:translation"/>
    <property type="evidence" value="ECO:0007669"/>
    <property type="project" value="UniProtKB-UniRule"/>
</dbReference>
<dbReference type="CDD" id="cd03368">
    <property type="entry name" value="Ribosomal_S12"/>
    <property type="match status" value="1"/>
</dbReference>
<dbReference type="FunFam" id="2.40.50.140:FF:000001">
    <property type="entry name" value="30S ribosomal protein S12"/>
    <property type="match status" value="1"/>
</dbReference>
<dbReference type="Gene3D" id="2.40.50.140">
    <property type="entry name" value="Nucleic acid-binding proteins"/>
    <property type="match status" value="1"/>
</dbReference>
<dbReference type="HAMAP" id="MF_00403_B">
    <property type="entry name" value="Ribosomal_uS12_B"/>
    <property type="match status" value="1"/>
</dbReference>
<dbReference type="InterPro" id="IPR012340">
    <property type="entry name" value="NA-bd_OB-fold"/>
</dbReference>
<dbReference type="InterPro" id="IPR006032">
    <property type="entry name" value="Ribosomal_uS12"/>
</dbReference>
<dbReference type="InterPro" id="IPR005679">
    <property type="entry name" value="Ribosomal_uS12_bac"/>
</dbReference>
<dbReference type="NCBIfam" id="TIGR00981">
    <property type="entry name" value="rpsL_bact"/>
    <property type="match status" value="1"/>
</dbReference>
<dbReference type="PANTHER" id="PTHR11652">
    <property type="entry name" value="30S RIBOSOMAL PROTEIN S12 FAMILY MEMBER"/>
    <property type="match status" value="1"/>
</dbReference>
<dbReference type="Pfam" id="PF00164">
    <property type="entry name" value="Ribosom_S12_S23"/>
    <property type="match status" value="1"/>
</dbReference>
<dbReference type="PIRSF" id="PIRSF002133">
    <property type="entry name" value="Ribosomal_S12/S23"/>
    <property type="match status" value="1"/>
</dbReference>
<dbReference type="PRINTS" id="PR01034">
    <property type="entry name" value="RIBOSOMALS12"/>
</dbReference>
<dbReference type="SUPFAM" id="SSF50249">
    <property type="entry name" value="Nucleic acid-binding proteins"/>
    <property type="match status" value="1"/>
</dbReference>
<dbReference type="PROSITE" id="PS00055">
    <property type="entry name" value="RIBOSOMAL_S12"/>
    <property type="match status" value="1"/>
</dbReference>
<comment type="function">
    <text evidence="1">With S4 and S5 plays an important role in translational accuracy.</text>
</comment>
<comment type="function">
    <text evidence="1">Interacts with and stabilizes bases of the 16S rRNA that are involved in tRNA selection in the A site and with the mRNA backbone. Located at the interface of the 30S and 50S subunits, it traverses the body of the 30S subunit contacting proteins on the other side and probably holding the rRNA structure together. The combined cluster of proteins S8, S12 and S17 appears to hold together the shoulder and platform of the 30S subunit.</text>
</comment>
<comment type="subunit">
    <text evidence="1">Part of the 30S ribosomal subunit. Contacts proteins S8 and S17. May interact with IF1 in the 30S initiation complex.</text>
</comment>
<comment type="similarity">
    <text evidence="1">Belongs to the universal ribosomal protein uS12 family.</text>
</comment>
<comment type="caution">
    <text evidence="3">Because the enzyme that would modify Asp-89 to 3-methylthioaspartic acid has not been found in the proteome of this organism, that modification is not predicted.</text>
</comment>
<comment type="sequence caution" evidence="3">
    <conflict type="erroneous initiation">
        <sequence resource="EMBL-CDS" id="AAA63909"/>
    </conflict>
</comment>
<comment type="sequence caution" evidence="3">
    <conflict type="erroneous initiation">
        <sequence resource="EMBL-CDS" id="CAA78671"/>
    </conflict>
</comment>